<keyword id="KW-0414">Isoprene biosynthesis</keyword>
<keyword id="KW-0464">Manganese</keyword>
<keyword id="KW-0479">Metal-binding</keyword>
<keyword id="KW-0521">NADP</keyword>
<keyword id="KW-0560">Oxidoreductase</keyword>
<organism>
    <name type="scientific">Porphyromonas gingivalis (strain ATCC 33277 / DSM 20709 / CIP 103683 / JCM 12257 / NCTC 11834 / 2561)</name>
    <dbReference type="NCBI Taxonomy" id="431947"/>
    <lineage>
        <taxon>Bacteria</taxon>
        <taxon>Pseudomonadati</taxon>
        <taxon>Bacteroidota</taxon>
        <taxon>Bacteroidia</taxon>
        <taxon>Bacteroidales</taxon>
        <taxon>Porphyromonadaceae</taxon>
        <taxon>Porphyromonas</taxon>
    </lineage>
</organism>
<feature type="chain" id="PRO_1000098508" description="1-deoxy-D-xylulose 5-phosphate reductoisomerase">
    <location>
        <begin position="1"/>
        <end position="385"/>
    </location>
</feature>
<feature type="binding site" evidence="1">
    <location>
        <position position="11"/>
    </location>
    <ligand>
        <name>NADPH</name>
        <dbReference type="ChEBI" id="CHEBI:57783"/>
    </ligand>
</feature>
<feature type="binding site" evidence="1">
    <location>
        <position position="12"/>
    </location>
    <ligand>
        <name>NADPH</name>
        <dbReference type="ChEBI" id="CHEBI:57783"/>
    </ligand>
</feature>
<feature type="binding site" evidence="1">
    <location>
        <position position="13"/>
    </location>
    <ligand>
        <name>NADPH</name>
        <dbReference type="ChEBI" id="CHEBI:57783"/>
    </ligand>
</feature>
<feature type="binding site" evidence="1">
    <location>
        <position position="14"/>
    </location>
    <ligand>
        <name>NADPH</name>
        <dbReference type="ChEBI" id="CHEBI:57783"/>
    </ligand>
</feature>
<feature type="binding site" evidence="1">
    <location>
        <position position="39"/>
    </location>
    <ligand>
        <name>NADPH</name>
        <dbReference type="ChEBI" id="CHEBI:57783"/>
    </ligand>
</feature>
<feature type="binding site" evidence="1">
    <location>
        <position position="123"/>
    </location>
    <ligand>
        <name>NADPH</name>
        <dbReference type="ChEBI" id="CHEBI:57783"/>
    </ligand>
</feature>
<feature type="binding site" evidence="1">
    <location>
        <position position="124"/>
    </location>
    <ligand>
        <name>1-deoxy-D-xylulose 5-phosphate</name>
        <dbReference type="ChEBI" id="CHEBI:57792"/>
    </ligand>
</feature>
<feature type="binding site" evidence="1">
    <location>
        <position position="125"/>
    </location>
    <ligand>
        <name>NADPH</name>
        <dbReference type="ChEBI" id="CHEBI:57783"/>
    </ligand>
</feature>
<feature type="binding site" evidence="1">
    <location>
        <position position="149"/>
    </location>
    <ligand>
        <name>Mn(2+)</name>
        <dbReference type="ChEBI" id="CHEBI:29035"/>
    </ligand>
</feature>
<feature type="binding site" evidence="1">
    <location>
        <position position="150"/>
    </location>
    <ligand>
        <name>1-deoxy-D-xylulose 5-phosphate</name>
        <dbReference type="ChEBI" id="CHEBI:57792"/>
    </ligand>
</feature>
<feature type="binding site" evidence="1">
    <location>
        <position position="151"/>
    </location>
    <ligand>
        <name>1-deoxy-D-xylulose 5-phosphate</name>
        <dbReference type="ChEBI" id="CHEBI:57792"/>
    </ligand>
</feature>
<feature type="binding site" evidence="1">
    <location>
        <position position="151"/>
    </location>
    <ligand>
        <name>Mn(2+)</name>
        <dbReference type="ChEBI" id="CHEBI:29035"/>
    </ligand>
</feature>
<feature type="binding site" evidence="1">
    <location>
        <position position="174"/>
    </location>
    <ligand>
        <name>1-deoxy-D-xylulose 5-phosphate</name>
        <dbReference type="ChEBI" id="CHEBI:57792"/>
    </ligand>
</feature>
<feature type="binding site" evidence="1">
    <location>
        <position position="197"/>
    </location>
    <ligand>
        <name>1-deoxy-D-xylulose 5-phosphate</name>
        <dbReference type="ChEBI" id="CHEBI:57792"/>
    </ligand>
</feature>
<feature type="binding site" evidence="1">
    <location>
        <position position="203"/>
    </location>
    <ligand>
        <name>NADPH</name>
        <dbReference type="ChEBI" id="CHEBI:57783"/>
    </ligand>
</feature>
<feature type="binding site" evidence="1">
    <location>
        <position position="210"/>
    </location>
    <ligand>
        <name>1-deoxy-D-xylulose 5-phosphate</name>
        <dbReference type="ChEBI" id="CHEBI:57792"/>
    </ligand>
</feature>
<feature type="binding site" evidence="1">
    <location>
        <position position="215"/>
    </location>
    <ligand>
        <name>1-deoxy-D-xylulose 5-phosphate</name>
        <dbReference type="ChEBI" id="CHEBI:57792"/>
    </ligand>
</feature>
<feature type="binding site" evidence="1">
    <location>
        <position position="216"/>
    </location>
    <ligand>
        <name>1-deoxy-D-xylulose 5-phosphate</name>
        <dbReference type="ChEBI" id="CHEBI:57792"/>
    </ligand>
</feature>
<feature type="binding site" evidence="1">
    <location>
        <position position="219"/>
    </location>
    <ligand>
        <name>1-deoxy-D-xylulose 5-phosphate</name>
        <dbReference type="ChEBI" id="CHEBI:57792"/>
    </ligand>
</feature>
<feature type="binding site" evidence="1">
    <location>
        <position position="219"/>
    </location>
    <ligand>
        <name>Mn(2+)</name>
        <dbReference type="ChEBI" id="CHEBI:29035"/>
    </ligand>
</feature>
<protein>
    <recommendedName>
        <fullName evidence="1">1-deoxy-D-xylulose 5-phosphate reductoisomerase</fullName>
        <shortName evidence="1">DXP reductoisomerase</shortName>
        <ecNumber evidence="1">1.1.1.267</ecNumber>
    </recommendedName>
    <alternativeName>
        <fullName evidence="1">1-deoxyxylulose-5-phosphate reductoisomerase</fullName>
    </alternativeName>
    <alternativeName>
        <fullName evidence="1">2-C-methyl-D-erythritol 4-phosphate synthase</fullName>
    </alternativeName>
</protein>
<dbReference type="EC" id="1.1.1.267" evidence="1"/>
<dbReference type="EMBL" id="AP009380">
    <property type="protein sequence ID" value="BAG33670.1"/>
    <property type="molecule type" value="Genomic_DNA"/>
</dbReference>
<dbReference type="RefSeq" id="WP_005874315.1">
    <property type="nucleotide sequence ID" value="NZ_CP025930.1"/>
</dbReference>
<dbReference type="SMR" id="B2RJX5"/>
<dbReference type="GeneID" id="29256357"/>
<dbReference type="KEGG" id="pgn:PGN_1151"/>
<dbReference type="eggNOG" id="COG0743">
    <property type="taxonomic scope" value="Bacteria"/>
</dbReference>
<dbReference type="HOGENOM" id="CLU_035714_4_0_10"/>
<dbReference type="OrthoDB" id="9806546at2"/>
<dbReference type="BioCyc" id="PGIN431947:G1G2V-1317-MONOMER"/>
<dbReference type="UniPathway" id="UPA00056">
    <property type="reaction ID" value="UER00092"/>
</dbReference>
<dbReference type="Proteomes" id="UP000008842">
    <property type="component" value="Chromosome"/>
</dbReference>
<dbReference type="GO" id="GO:0030604">
    <property type="term" value="F:1-deoxy-D-xylulose-5-phosphate reductoisomerase activity"/>
    <property type="evidence" value="ECO:0007669"/>
    <property type="project" value="UniProtKB-UniRule"/>
</dbReference>
<dbReference type="GO" id="GO:0030145">
    <property type="term" value="F:manganese ion binding"/>
    <property type="evidence" value="ECO:0007669"/>
    <property type="project" value="TreeGrafter"/>
</dbReference>
<dbReference type="GO" id="GO:0070402">
    <property type="term" value="F:NADPH binding"/>
    <property type="evidence" value="ECO:0007669"/>
    <property type="project" value="InterPro"/>
</dbReference>
<dbReference type="GO" id="GO:0051484">
    <property type="term" value="P:isopentenyl diphosphate biosynthetic process, methylerythritol 4-phosphate pathway involved in terpenoid biosynthetic process"/>
    <property type="evidence" value="ECO:0007669"/>
    <property type="project" value="TreeGrafter"/>
</dbReference>
<dbReference type="FunFam" id="3.40.50.720:FF:000045">
    <property type="entry name" value="1-deoxy-D-xylulose 5-phosphate reductoisomerase"/>
    <property type="match status" value="1"/>
</dbReference>
<dbReference type="Gene3D" id="1.10.1740.10">
    <property type="match status" value="1"/>
</dbReference>
<dbReference type="Gene3D" id="3.40.50.720">
    <property type="entry name" value="NAD(P)-binding Rossmann-like Domain"/>
    <property type="match status" value="1"/>
</dbReference>
<dbReference type="HAMAP" id="MF_00183">
    <property type="entry name" value="DXP_reductoisom"/>
    <property type="match status" value="1"/>
</dbReference>
<dbReference type="InterPro" id="IPR003821">
    <property type="entry name" value="DXP_reductoisomerase"/>
</dbReference>
<dbReference type="InterPro" id="IPR013644">
    <property type="entry name" value="DXP_reductoisomerase_C"/>
</dbReference>
<dbReference type="InterPro" id="IPR013512">
    <property type="entry name" value="DXP_reductoisomerase_N"/>
</dbReference>
<dbReference type="InterPro" id="IPR026877">
    <property type="entry name" value="DXPR_C"/>
</dbReference>
<dbReference type="InterPro" id="IPR036169">
    <property type="entry name" value="DXPR_C_sf"/>
</dbReference>
<dbReference type="InterPro" id="IPR036291">
    <property type="entry name" value="NAD(P)-bd_dom_sf"/>
</dbReference>
<dbReference type="NCBIfam" id="TIGR00243">
    <property type="entry name" value="Dxr"/>
    <property type="match status" value="1"/>
</dbReference>
<dbReference type="NCBIfam" id="NF009114">
    <property type="entry name" value="PRK12464.1"/>
    <property type="match status" value="1"/>
</dbReference>
<dbReference type="PANTHER" id="PTHR30525">
    <property type="entry name" value="1-DEOXY-D-XYLULOSE 5-PHOSPHATE REDUCTOISOMERASE"/>
    <property type="match status" value="1"/>
</dbReference>
<dbReference type="PANTHER" id="PTHR30525:SF0">
    <property type="entry name" value="1-DEOXY-D-XYLULOSE 5-PHOSPHATE REDUCTOISOMERASE, CHLOROPLASTIC"/>
    <property type="match status" value="1"/>
</dbReference>
<dbReference type="Pfam" id="PF08436">
    <property type="entry name" value="DXP_redisom_C"/>
    <property type="match status" value="1"/>
</dbReference>
<dbReference type="Pfam" id="PF02670">
    <property type="entry name" value="DXP_reductoisom"/>
    <property type="match status" value="1"/>
</dbReference>
<dbReference type="Pfam" id="PF13288">
    <property type="entry name" value="DXPR_C"/>
    <property type="match status" value="1"/>
</dbReference>
<dbReference type="PIRSF" id="PIRSF006205">
    <property type="entry name" value="Dxp_reductismrs"/>
    <property type="match status" value="1"/>
</dbReference>
<dbReference type="SUPFAM" id="SSF69055">
    <property type="entry name" value="1-deoxy-D-xylulose-5-phosphate reductoisomerase, C-terminal domain"/>
    <property type="match status" value="1"/>
</dbReference>
<dbReference type="SUPFAM" id="SSF55347">
    <property type="entry name" value="Glyceraldehyde-3-phosphate dehydrogenase-like, C-terminal domain"/>
    <property type="match status" value="1"/>
</dbReference>
<dbReference type="SUPFAM" id="SSF51735">
    <property type="entry name" value="NAD(P)-binding Rossmann-fold domains"/>
    <property type="match status" value="1"/>
</dbReference>
<comment type="function">
    <text evidence="1">Catalyzes the NADPH-dependent rearrangement and reduction of 1-deoxy-D-xylulose-5-phosphate (DXP) to 2-C-methyl-D-erythritol 4-phosphate (MEP).</text>
</comment>
<comment type="catalytic activity">
    <reaction evidence="1">
        <text>2-C-methyl-D-erythritol 4-phosphate + NADP(+) = 1-deoxy-D-xylulose 5-phosphate + NADPH + H(+)</text>
        <dbReference type="Rhea" id="RHEA:13717"/>
        <dbReference type="ChEBI" id="CHEBI:15378"/>
        <dbReference type="ChEBI" id="CHEBI:57783"/>
        <dbReference type="ChEBI" id="CHEBI:57792"/>
        <dbReference type="ChEBI" id="CHEBI:58262"/>
        <dbReference type="ChEBI" id="CHEBI:58349"/>
        <dbReference type="EC" id="1.1.1.267"/>
    </reaction>
    <physiologicalReaction direction="right-to-left" evidence="1">
        <dbReference type="Rhea" id="RHEA:13719"/>
    </physiologicalReaction>
</comment>
<comment type="cofactor">
    <cofactor evidence="1">
        <name>Mg(2+)</name>
        <dbReference type="ChEBI" id="CHEBI:18420"/>
    </cofactor>
    <cofactor evidence="1">
        <name>Mn(2+)</name>
        <dbReference type="ChEBI" id="CHEBI:29035"/>
    </cofactor>
</comment>
<comment type="pathway">
    <text evidence="1">Isoprenoid biosynthesis; isopentenyl diphosphate biosynthesis via DXP pathway; isopentenyl diphosphate from 1-deoxy-D-xylulose 5-phosphate: step 1/6.</text>
</comment>
<comment type="similarity">
    <text evidence="1">Belongs to the DXR family.</text>
</comment>
<accession>B2RJX5</accession>
<evidence type="ECO:0000255" key="1">
    <source>
        <dbReference type="HAMAP-Rule" id="MF_00183"/>
    </source>
</evidence>
<reference key="1">
    <citation type="journal article" date="2008" name="DNA Res.">
        <title>Determination of the genome sequence of Porphyromonas gingivalis strain ATCC 33277 and genomic comparison with strain W83 revealed extensive genome rearrangements in P. gingivalis.</title>
        <authorList>
            <person name="Naito M."/>
            <person name="Hirakawa H."/>
            <person name="Yamashita A."/>
            <person name="Ohara N."/>
            <person name="Shoji M."/>
            <person name="Yukitake H."/>
            <person name="Nakayama K."/>
            <person name="Toh H."/>
            <person name="Yoshimura F."/>
            <person name="Kuhara S."/>
            <person name="Hattori M."/>
            <person name="Hayashi T."/>
            <person name="Nakayama K."/>
        </authorList>
    </citation>
    <scope>NUCLEOTIDE SEQUENCE [LARGE SCALE GENOMIC DNA]</scope>
    <source>
        <strain>ATCC 33277 / DSM 20709 / CIP 103683 / JCM 12257 / NCTC 11834 / 2561</strain>
    </source>
</reference>
<name>DXR_PORG3</name>
<sequence>MKKNIAILGSTGSIGTQTLDIIHLNPDLFDVYLLTANNNVDLLIRQAREYRPEIVVIANDQKYHLIQEALADLPIKVWCGAEAIADAVTAPDIDMVVTAMVGYSGLLPTIKAIEARKMIALANKETLVVAGELIMRLAQDNQVPILPVDSEHSAIFQALLGERQRPEKILLTASGGPFLHLTAEELQHATREQALRHPNWNMGAKVTIDSASLMNKGFEMIEAKWLFEMQPDEIEILVHPQSIIHSMVQFRDGSVKAQLGIPDMRLPISYALGITHRIPNDYPRVDFTATPLTFERPDLERFPNLSYAFDAIRLGGNAPCALNAANEIAVTAFLRDEISFTDMSRLLYEVMEKHELFREVSLPTFIETDSNTRRVAESLLPKFRR</sequence>
<proteinExistence type="inferred from homology"/>
<gene>
    <name evidence="1" type="primary">dxr</name>
    <name type="ordered locus">PGN_1151</name>
</gene>